<gene>
    <name evidence="1" type="primary">aroB</name>
    <name type="ordered locus">COXBURSA331_A2098</name>
</gene>
<proteinExistence type="inferred from homology"/>
<dbReference type="EC" id="4.2.3.4" evidence="1"/>
<dbReference type="EMBL" id="CP000890">
    <property type="protein sequence ID" value="ABX78831.1"/>
    <property type="molecule type" value="Genomic_DNA"/>
</dbReference>
<dbReference type="RefSeq" id="WP_010958520.1">
    <property type="nucleotide sequence ID" value="NC_010117.1"/>
</dbReference>
<dbReference type="SMR" id="A9NB81"/>
<dbReference type="KEGG" id="cbs:COXBURSA331_A2098"/>
<dbReference type="HOGENOM" id="CLU_001201_0_2_6"/>
<dbReference type="UniPathway" id="UPA00053">
    <property type="reaction ID" value="UER00085"/>
</dbReference>
<dbReference type="GO" id="GO:0005737">
    <property type="term" value="C:cytoplasm"/>
    <property type="evidence" value="ECO:0007669"/>
    <property type="project" value="UniProtKB-SubCell"/>
</dbReference>
<dbReference type="GO" id="GO:0003856">
    <property type="term" value="F:3-dehydroquinate synthase activity"/>
    <property type="evidence" value="ECO:0007669"/>
    <property type="project" value="UniProtKB-UniRule"/>
</dbReference>
<dbReference type="GO" id="GO:0046872">
    <property type="term" value="F:metal ion binding"/>
    <property type="evidence" value="ECO:0007669"/>
    <property type="project" value="UniProtKB-KW"/>
</dbReference>
<dbReference type="GO" id="GO:0000166">
    <property type="term" value="F:nucleotide binding"/>
    <property type="evidence" value="ECO:0007669"/>
    <property type="project" value="UniProtKB-KW"/>
</dbReference>
<dbReference type="GO" id="GO:0008652">
    <property type="term" value="P:amino acid biosynthetic process"/>
    <property type="evidence" value="ECO:0007669"/>
    <property type="project" value="UniProtKB-KW"/>
</dbReference>
<dbReference type="GO" id="GO:0009073">
    <property type="term" value="P:aromatic amino acid family biosynthetic process"/>
    <property type="evidence" value="ECO:0007669"/>
    <property type="project" value="UniProtKB-KW"/>
</dbReference>
<dbReference type="GO" id="GO:0009423">
    <property type="term" value="P:chorismate biosynthetic process"/>
    <property type="evidence" value="ECO:0007669"/>
    <property type="project" value="UniProtKB-UniRule"/>
</dbReference>
<dbReference type="CDD" id="cd08195">
    <property type="entry name" value="DHQS"/>
    <property type="match status" value="1"/>
</dbReference>
<dbReference type="FunFam" id="3.40.50.1970:FF:000035">
    <property type="entry name" value="3-dehydroquinate synthase"/>
    <property type="match status" value="1"/>
</dbReference>
<dbReference type="Gene3D" id="3.40.50.1970">
    <property type="match status" value="1"/>
</dbReference>
<dbReference type="Gene3D" id="1.20.1090.10">
    <property type="entry name" value="Dehydroquinate synthase-like - alpha domain"/>
    <property type="match status" value="1"/>
</dbReference>
<dbReference type="HAMAP" id="MF_00110">
    <property type="entry name" value="DHQ_synthase"/>
    <property type="match status" value="1"/>
</dbReference>
<dbReference type="InterPro" id="IPR050071">
    <property type="entry name" value="Dehydroquinate_synthase"/>
</dbReference>
<dbReference type="InterPro" id="IPR016037">
    <property type="entry name" value="DHQ_synth_AroB"/>
</dbReference>
<dbReference type="InterPro" id="IPR030963">
    <property type="entry name" value="DHQ_synth_fam"/>
</dbReference>
<dbReference type="InterPro" id="IPR030960">
    <property type="entry name" value="DHQS/DOIS_N"/>
</dbReference>
<dbReference type="InterPro" id="IPR056179">
    <property type="entry name" value="DHQS_C"/>
</dbReference>
<dbReference type="NCBIfam" id="TIGR01357">
    <property type="entry name" value="aroB"/>
    <property type="match status" value="1"/>
</dbReference>
<dbReference type="PANTHER" id="PTHR43622">
    <property type="entry name" value="3-DEHYDROQUINATE SYNTHASE"/>
    <property type="match status" value="1"/>
</dbReference>
<dbReference type="PANTHER" id="PTHR43622:SF7">
    <property type="entry name" value="3-DEHYDROQUINATE SYNTHASE, CHLOROPLASTIC"/>
    <property type="match status" value="1"/>
</dbReference>
<dbReference type="Pfam" id="PF01761">
    <property type="entry name" value="DHQ_synthase"/>
    <property type="match status" value="1"/>
</dbReference>
<dbReference type="Pfam" id="PF24621">
    <property type="entry name" value="DHQS_C"/>
    <property type="match status" value="1"/>
</dbReference>
<dbReference type="PIRSF" id="PIRSF001455">
    <property type="entry name" value="DHQ_synth"/>
    <property type="match status" value="1"/>
</dbReference>
<dbReference type="SUPFAM" id="SSF56796">
    <property type="entry name" value="Dehydroquinate synthase-like"/>
    <property type="match status" value="1"/>
</dbReference>
<organism>
    <name type="scientific">Coxiella burnetii (strain RSA 331 / Henzerling II)</name>
    <dbReference type="NCBI Taxonomy" id="360115"/>
    <lineage>
        <taxon>Bacteria</taxon>
        <taxon>Pseudomonadati</taxon>
        <taxon>Pseudomonadota</taxon>
        <taxon>Gammaproteobacteria</taxon>
        <taxon>Legionellales</taxon>
        <taxon>Coxiellaceae</taxon>
        <taxon>Coxiella</taxon>
    </lineage>
</organism>
<name>AROB_COXBR</name>
<feature type="chain" id="PRO_1000094499" description="3-dehydroquinate synthase">
    <location>
        <begin position="1"/>
        <end position="360"/>
    </location>
</feature>
<feature type="binding site" evidence="1">
    <location>
        <begin position="71"/>
        <end position="76"/>
    </location>
    <ligand>
        <name>NAD(+)</name>
        <dbReference type="ChEBI" id="CHEBI:57540"/>
    </ligand>
</feature>
<feature type="binding site" evidence="1">
    <location>
        <begin position="105"/>
        <end position="109"/>
    </location>
    <ligand>
        <name>NAD(+)</name>
        <dbReference type="ChEBI" id="CHEBI:57540"/>
    </ligand>
</feature>
<feature type="binding site" evidence="1">
    <location>
        <begin position="129"/>
        <end position="130"/>
    </location>
    <ligand>
        <name>NAD(+)</name>
        <dbReference type="ChEBI" id="CHEBI:57540"/>
    </ligand>
</feature>
<feature type="binding site" evidence="1">
    <location>
        <position position="142"/>
    </location>
    <ligand>
        <name>NAD(+)</name>
        <dbReference type="ChEBI" id="CHEBI:57540"/>
    </ligand>
</feature>
<feature type="binding site" evidence="1">
    <location>
        <position position="151"/>
    </location>
    <ligand>
        <name>NAD(+)</name>
        <dbReference type="ChEBI" id="CHEBI:57540"/>
    </ligand>
</feature>
<feature type="binding site" evidence="1">
    <location>
        <begin position="169"/>
        <end position="172"/>
    </location>
    <ligand>
        <name>NAD(+)</name>
        <dbReference type="ChEBI" id="CHEBI:57540"/>
    </ligand>
</feature>
<feature type="binding site" evidence="1">
    <location>
        <position position="184"/>
    </location>
    <ligand>
        <name>Zn(2+)</name>
        <dbReference type="ChEBI" id="CHEBI:29105"/>
    </ligand>
</feature>
<feature type="binding site" evidence="1">
    <location>
        <position position="248"/>
    </location>
    <ligand>
        <name>Zn(2+)</name>
        <dbReference type="ChEBI" id="CHEBI:29105"/>
    </ligand>
</feature>
<feature type="binding site" evidence="1">
    <location>
        <position position="265"/>
    </location>
    <ligand>
        <name>Zn(2+)</name>
        <dbReference type="ChEBI" id="CHEBI:29105"/>
    </ligand>
</feature>
<keyword id="KW-0028">Amino-acid biosynthesis</keyword>
<keyword id="KW-0057">Aromatic amino acid biosynthesis</keyword>
<keyword id="KW-0170">Cobalt</keyword>
<keyword id="KW-0963">Cytoplasm</keyword>
<keyword id="KW-0456">Lyase</keyword>
<keyword id="KW-0479">Metal-binding</keyword>
<keyword id="KW-0520">NAD</keyword>
<keyword id="KW-0547">Nucleotide-binding</keyword>
<keyword id="KW-0862">Zinc</keyword>
<reference key="1">
    <citation type="submission" date="2007-11" db="EMBL/GenBank/DDBJ databases">
        <title>Genome sequencing of phylogenetically and phenotypically diverse Coxiella burnetii isolates.</title>
        <authorList>
            <person name="Seshadri R."/>
            <person name="Samuel J.E."/>
        </authorList>
    </citation>
    <scope>NUCLEOTIDE SEQUENCE [LARGE SCALE GENOMIC DNA]</scope>
    <source>
        <strain>RSA 331 / Henzerling II</strain>
    </source>
</reference>
<accession>A9NB81</accession>
<protein>
    <recommendedName>
        <fullName evidence="1">3-dehydroquinate synthase</fullName>
        <shortName evidence="1">DHQS</shortName>
        <ecNumber evidence="1">4.2.3.4</ecNumber>
    </recommendedName>
</protein>
<evidence type="ECO:0000255" key="1">
    <source>
        <dbReference type="HAMAP-Rule" id="MF_00110"/>
    </source>
</evidence>
<sequence length="360" mass="40414">MKTERVNVNVNNQPYPIYIGENLLQDKSLLQRHVKGRQVMIVSNETIAAFYLDPLKAIYQDFQCDTFILPDGEQYKTLEYWEHILHKLASCNHHRDTTLIALGGGVVGDITGFAAACYQRGVDFIQVPTTLLAQVDASIGGKTAVNHPVGKNLIGAFHQPKAVIIDLNTLNTLPEREFKAGMAEIVKAALIKDEKFFTDLENKMSDLLQRNFIFLQAVIKRAAEIKRDIVNADEKERSGERALLNLGHTFAHAIERLLGYGQWLHGEAVSAGLVLAAQLSHRKNLLDFESLQRICRLLTQISLPIHFPKSINADELLSAMYMDKKVANERLHLILLEDLGHAVVSDQVDDRELKSFLENG</sequence>
<comment type="function">
    <text evidence="1">Catalyzes the conversion of 3-deoxy-D-arabino-heptulosonate 7-phosphate (DAHP) to dehydroquinate (DHQ).</text>
</comment>
<comment type="catalytic activity">
    <reaction evidence="1">
        <text>7-phospho-2-dehydro-3-deoxy-D-arabino-heptonate = 3-dehydroquinate + phosphate</text>
        <dbReference type="Rhea" id="RHEA:21968"/>
        <dbReference type="ChEBI" id="CHEBI:32364"/>
        <dbReference type="ChEBI" id="CHEBI:43474"/>
        <dbReference type="ChEBI" id="CHEBI:58394"/>
        <dbReference type="EC" id="4.2.3.4"/>
    </reaction>
</comment>
<comment type="cofactor">
    <cofactor evidence="1">
        <name>Co(2+)</name>
        <dbReference type="ChEBI" id="CHEBI:48828"/>
    </cofactor>
    <cofactor evidence="1">
        <name>Zn(2+)</name>
        <dbReference type="ChEBI" id="CHEBI:29105"/>
    </cofactor>
    <text evidence="1">Binds 1 divalent metal cation per subunit. Can use either Co(2+) or Zn(2+).</text>
</comment>
<comment type="cofactor">
    <cofactor evidence="1">
        <name>NAD(+)</name>
        <dbReference type="ChEBI" id="CHEBI:57540"/>
    </cofactor>
</comment>
<comment type="pathway">
    <text evidence="1">Metabolic intermediate biosynthesis; chorismate biosynthesis; chorismate from D-erythrose 4-phosphate and phosphoenolpyruvate: step 2/7.</text>
</comment>
<comment type="subcellular location">
    <subcellularLocation>
        <location evidence="1">Cytoplasm</location>
    </subcellularLocation>
</comment>
<comment type="similarity">
    <text evidence="1">Belongs to the sugar phosphate cyclases superfamily. Dehydroquinate synthase family.</text>
</comment>